<feature type="initiator methionine" description="Removed" evidence="1">
    <location>
        <position position="1"/>
    </location>
</feature>
<feature type="chain" id="PRO_0000055324" description="Histone H2A-alpha">
    <location>
        <begin position="2"/>
        <end position="132"/>
    </location>
</feature>
<feature type="short sequence motif" description="[ST]-Q motif">
    <location>
        <begin position="129"/>
        <end position="130"/>
    </location>
</feature>
<feature type="site" description="Not ubiquitinated" evidence="6">
    <location>
        <position position="120"/>
    </location>
</feature>
<feature type="modified residue" description="N-acetylserine" evidence="1">
    <location>
        <position position="2"/>
    </location>
</feature>
<feature type="modified residue" description="N6-acetyllysine" evidence="1">
    <location>
        <position position="5"/>
    </location>
</feature>
<feature type="modified residue" description="N6-acetyllysine" evidence="1">
    <location>
        <position position="9"/>
    </location>
</feature>
<feature type="modified residue" description="N5-methylglutamine" evidence="2">
    <location>
        <position position="106"/>
    </location>
</feature>
<feature type="modified residue" description="Phosphoserine" evidence="4 5">
    <location>
        <position position="129"/>
    </location>
</feature>
<feature type="mutagenesis site" description="Causes hypersensitivity to DNA-damage-inducing agents and impairs recruitment of crb2 to DSB sites. Loss of interaction with mdb1." evidence="4 5">
    <original>S</original>
    <variation>A</variation>
    <location>
        <position position="129"/>
    </location>
</feature>
<feature type="sequence conflict" description="In Ref. 1; AAA35311." evidence="6" ref="1">
    <original>R</original>
    <variation>G</variation>
    <location>
        <position position="124"/>
    </location>
</feature>
<accession>P04909</accession>
<sequence length="132" mass="13878">MSGGKSGGKAAVAKSAQSRSAKAGLAFPVGRVHRLLRKGNYAQRVGAGAPVYLAAVLEYLAAEILELAGNAARDNKKTRIIPRHLQLAIRNDEELNKLLGHVTIAQGGVVPNINAHLLPKTSGRTGKPSQEL</sequence>
<evidence type="ECO:0000250" key="1"/>
<evidence type="ECO:0000250" key="2">
    <source>
        <dbReference type="UniProtKB" id="P04911"/>
    </source>
</evidence>
<evidence type="ECO:0000250" key="3">
    <source>
        <dbReference type="UniProtKB" id="P68431"/>
    </source>
</evidence>
<evidence type="ECO:0000269" key="4">
    <source>
    </source>
</evidence>
<evidence type="ECO:0000269" key="5">
    <source>
    </source>
</evidence>
<evidence type="ECO:0000305" key="6"/>
<gene>
    <name type="primary">hta1</name>
    <name type="ORF">SPCC622.08c</name>
</gene>
<dbReference type="EMBL" id="M11494">
    <property type="protein sequence ID" value="AAA35311.1"/>
    <property type="molecule type" value="Genomic_DNA"/>
</dbReference>
<dbReference type="EMBL" id="X05220">
    <property type="protein sequence ID" value="CAA28848.1"/>
    <property type="molecule type" value="Genomic_DNA"/>
</dbReference>
<dbReference type="EMBL" id="CU329672">
    <property type="protein sequence ID" value="CAA21864.1"/>
    <property type="molecule type" value="Genomic_DNA"/>
</dbReference>
<dbReference type="PIR" id="B27399">
    <property type="entry name" value="HSZPA2"/>
</dbReference>
<dbReference type="RefSeq" id="NP_588180.1">
    <property type="nucleotide sequence ID" value="NM_001023170.2"/>
</dbReference>
<dbReference type="SMR" id="P04909"/>
<dbReference type="BioGRID" id="276062">
    <property type="interactions" value="72"/>
</dbReference>
<dbReference type="FunCoup" id="P04909">
    <property type="interactions" value="270"/>
</dbReference>
<dbReference type="IntAct" id="P04909">
    <property type="interactions" value="1"/>
</dbReference>
<dbReference type="MINT" id="P04909"/>
<dbReference type="STRING" id="284812.P04909"/>
<dbReference type="iPTMnet" id="P04909"/>
<dbReference type="PaxDb" id="4896-SPCC622.08c.1"/>
<dbReference type="EnsemblFungi" id="SPCC622.08c.1">
    <property type="protein sequence ID" value="SPCC622.08c.1:pep"/>
    <property type="gene ID" value="SPCC622.08c"/>
</dbReference>
<dbReference type="GeneID" id="2539499"/>
<dbReference type="KEGG" id="spo:2539499"/>
<dbReference type="PomBase" id="SPCC622.08c">
    <property type="gene designation" value="hta1"/>
</dbReference>
<dbReference type="VEuPathDB" id="FungiDB:SPCC622.08c"/>
<dbReference type="eggNOG" id="KOG1756">
    <property type="taxonomic scope" value="Eukaryota"/>
</dbReference>
<dbReference type="HOGENOM" id="CLU_062828_3_0_1"/>
<dbReference type="InParanoid" id="P04909"/>
<dbReference type="OMA" id="ANEMFIN"/>
<dbReference type="PhylomeDB" id="P04909"/>
<dbReference type="Reactome" id="R-SPO-2299718">
    <property type="pathway name" value="Condensation of Prophase Chromosomes"/>
</dbReference>
<dbReference type="Reactome" id="R-SPO-2559580">
    <property type="pathway name" value="Oxidative Stress Induced Senescence"/>
</dbReference>
<dbReference type="Reactome" id="R-SPO-3214815">
    <property type="pathway name" value="HDACs deacetylate histones"/>
</dbReference>
<dbReference type="Reactome" id="R-SPO-3214858">
    <property type="pathway name" value="RMTs methylate histone arginines"/>
</dbReference>
<dbReference type="Reactome" id="R-SPO-427359">
    <property type="pathway name" value="SIRT1 negatively regulates rRNA expression"/>
</dbReference>
<dbReference type="Reactome" id="R-SPO-5578749">
    <property type="pathway name" value="Transcriptional regulation by small RNAs"/>
</dbReference>
<dbReference type="Reactome" id="R-SPO-5625886">
    <property type="pathway name" value="Activated PKN1 stimulates transcription of AR (androgen receptor) regulated genes KLK2 and KLK3"/>
</dbReference>
<dbReference type="Reactome" id="R-SPO-5689880">
    <property type="pathway name" value="Ub-specific processing proteases"/>
</dbReference>
<dbReference type="Reactome" id="R-SPO-5693565">
    <property type="pathway name" value="Recruitment and ATM-mediated phosphorylation of repair and signaling proteins at DNA double strand breaks"/>
</dbReference>
<dbReference type="Reactome" id="R-SPO-68616">
    <property type="pathway name" value="Assembly of the ORC complex at the origin of replication"/>
</dbReference>
<dbReference type="Reactome" id="R-SPO-73772">
    <property type="pathway name" value="RNA Polymerase I Promoter Escape"/>
</dbReference>
<dbReference type="Reactome" id="R-SPO-9018519">
    <property type="pathway name" value="Estrogen-dependent gene expression"/>
</dbReference>
<dbReference type="PRO" id="PR:P04909"/>
<dbReference type="Proteomes" id="UP000002485">
    <property type="component" value="Chromosome III"/>
</dbReference>
<dbReference type="GO" id="GO:0099115">
    <property type="term" value="C:chromosome, subtelomeric region"/>
    <property type="evidence" value="ECO:0000314"/>
    <property type="project" value="PomBase"/>
</dbReference>
<dbReference type="GO" id="GO:0031934">
    <property type="term" value="C:mating-type region heterochromatin"/>
    <property type="evidence" value="ECO:0000314"/>
    <property type="project" value="PomBase"/>
</dbReference>
<dbReference type="GO" id="GO:0000786">
    <property type="term" value="C:nucleosome"/>
    <property type="evidence" value="ECO:0000318"/>
    <property type="project" value="GO_Central"/>
</dbReference>
<dbReference type="GO" id="GO:0005634">
    <property type="term" value="C:nucleus"/>
    <property type="evidence" value="ECO:0000269"/>
    <property type="project" value="PomBase"/>
</dbReference>
<dbReference type="GO" id="GO:0005721">
    <property type="term" value="C:pericentric heterochromatin"/>
    <property type="evidence" value="ECO:0000314"/>
    <property type="project" value="PomBase"/>
</dbReference>
<dbReference type="GO" id="GO:0033553">
    <property type="term" value="C:rDNA heterochromatin"/>
    <property type="evidence" value="ECO:0000314"/>
    <property type="project" value="PomBase"/>
</dbReference>
<dbReference type="GO" id="GO:0140463">
    <property type="term" value="F:chromatin-protein adaptor activity"/>
    <property type="evidence" value="ECO:0000315"/>
    <property type="project" value="PomBase"/>
</dbReference>
<dbReference type="GO" id="GO:0003677">
    <property type="term" value="F:DNA binding"/>
    <property type="evidence" value="ECO:0000255"/>
    <property type="project" value="PomBase"/>
</dbReference>
<dbReference type="GO" id="GO:0046982">
    <property type="term" value="F:protein heterodimerization activity"/>
    <property type="evidence" value="ECO:0007669"/>
    <property type="project" value="InterPro"/>
</dbReference>
<dbReference type="GO" id="GO:0030527">
    <property type="term" value="F:structural constituent of chromatin"/>
    <property type="evidence" value="ECO:0000318"/>
    <property type="project" value="GO_Central"/>
</dbReference>
<dbReference type="GO" id="GO:0006302">
    <property type="term" value="P:double-strand break repair"/>
    <property type="evidence" value="ECO:0000269"/>
    <property type="project" value="PomBase"/>
</dbReference>
<dbReference type="GO" id="GO:0031507">
    <property type="term" value="P:heterochromatin formation"/>
    <property type="evidence" value="ECO:0000318"/>
    <property type="project" value="GO_Central"/>
</dbReference>
<dbReference type="GO" id="GO:0045143">
    <property type="term" value="P:homologous chromosome segregation"/>
    <property type="evidence" value="ECO:0000315"/>
    <property type="project" value="PomBase"/>
</dbReference>
<dbReference type="GO" id="GO:0007076">
    <property type="term" value="P:mitotic chromosome condensation"/>
    <property type="evidence" value="ECO:0000315"/>
    <property type="project" value="PomBase"/>
</dbReference>
<dbReference type="GO" id="GO:0044773">
    <property type="term" value="P:mitotic DNA damage checkpoint signaling"/>
    <property type="evidence" value="ECO:0000269"/>
    <property type="project" value="PomBase"/>
</dbReference>
<dbReference type="GO" id="GO:0007095">
    <property type="term" value="P:mitotic G2 DNA damage checkpoint signaling"/>
    <property type="evidence" value="ECO:0000314"/>
    <property type="project" value="PomBase"/>
</dbReference>
<dbReference type="CDD" id="cd00074">
    <property type="entry name" value="HFD_H2A"/>
    <property type="match status" value="1"/>
</dbReference>
<dbReference type="FunFam" id="1.10.20.10:FF:000008">
    <property type="entry name" value="Histone H2A"/>
    <property type="match status" value="1"/>
</dbReference>
<dbReference type="Gene3D" id="1.10.20.10">
    <property type="entry name" value="Histone, subunit A"/>
    <property type="match status" value="1"/>
</dbReference>
<dbReference type="InterPro" id="IPR009072">
    <property type="entry name" value="Histone-fold"/>
</dbReference>
<dbReference type="InterPro" id="IPR002119">
    <property type="entry name" value="Histone_H2A"/>
</dbReference>
<dbReference type="InterPro" id="IPR007125">
    <property type="entry name" value="Histone_H2A/H2B/H3"/>
</dbReference>
<dbReference type="InterPro" id="IPR032454">
    <property type="entry name" value="Histone_H2A_C"/>
</dbReference>
<dbReference type="InterPro" id="IPR032458">
    <property type="entry name" value="Histone_H2A_CS"/>
</dbReference>
<dbReference type="PANTHER" id="PTHR23430">
    <property type="entry name" value="HISTONE H2A"/>
    <property type="match status" value="1"/>
</dbReference>
<dbReference type="Pfam" id="PF00125">
    <property type="entry name" value="Histone"/>
    <property type="match status" value="1"/>
</dbReference>
<dbReference type="Pfam" id="PF16211">
    <property type="entry name" value="Histone_H2A_C"/>
    <property type="match status" value="1"/>
</dbReference>
<dbReference type="PRINTS" id="PR00620">
    <property type="entry name" value="HISTONEH2A"/>
</dbReference>
<dbReference type="SMART" id="SM00414">
    <property type="entry name" value="H2A"/>
    <property type="match status" value="1"/>
</dbReference>
<dbReference type="SUPFAM" id="SSF47113">
    <property type="entry name" value="Histone-fold"/>
    <property type="match status" value="1"/>
</dbReference>
<dbReference type="PROSITE" id="PS00046">
    <property type="entry name" value="HISTONE_H2A"/>
    <property type="match status" value="1"/>
</dbReference>
<proteinExistence type="evidence at protein level"/>
<protein>
    <recommendedName>
        <fullName>Histone H2A-alpha</fullName>
    </recommendedName>
    <alternativeName>
        <fullName>H2A.1</fullName>
    </alternativeName>
</protein>
<keyword id="KW-0007">Acetylation</keyword>
<keyword id="KW-0158">Chromosome</keyword>
<keyword id="KW-0227">DNA damage</keyword>
<keyword id="KW-0234">DNA repair</keyword>
<keyword id="KW-0238">DNA-binding</keyword>
<keyword id="KW-0488">Methylation</keyword>
<keyword id="KW-0544">Nucleosome core</keyword>
<keyword id="KW-0539">Nucleus</keyword>
<keyword id="KW-0597">Phosphoprotein</keyword>
<keyword id="KW-1185">Reference proteome</keyword>
<comment type="function">
    <text evidence="4">Core component of nucleosome which plays a central role in DNA double strand break (DSB) repair. Nucleosomes wrap and compact DNA into chromatin, limiting DNA accessibility to the cellular machineries which require DNA as a template. Histones thereby play a central role in transcription regulation, DNA repair, DNA replication and chromosomal stability. DNA accessibility is regulated via a complex set of post-translational modifications of histones, also called histone code, and nucleosome remodeling.</text>
</comment>
<comment type="subunit">
    <text evidence="3 5">The nucleosome is a histone octamer containing two molecules each of H2A, H2B, H3 and H4 assembled in one H3-H4 heterotetramer and two H2A-H2B heterodimers. The octamer wraps approximately 147 bp of DNA (By similarity). Interacts with mdb1 (via BRCT domain) in vitro; this interaction requires phosphorylation of this protein at the S/T-Q motif (PubMed:24806815).</text>
</comment>
<comment type="interaction">
    <interactant intactId="EBI-7764873">
        <id>P04909</id>
    </interactant>
    <interactant intactId="EBI-7764855">
        <id>Q10337</id>
        <label>brc1</label>
    </interactant>
    <organismsDiffer>false</organismsDiffer>
    <experiments>4</experiments>
</comment>
<comment type="subcellular location">
    <subcellularLocation>
        <location>Nucleus</location>
    </subcellularLocation>
    <subcellularLocation>
        <location>Chromosome</location>
    </subcellularLocation>
</comment>
<comment type="domain">
    <text>The [ST]-Q motif constitutes a recognition sequence for kinases from the PI3/PI4-kinase family.</text>
</comment>
<comment type="PTM">
    <text evidence="4">Phosphorylated to form H2AS128ph (gamma-H2A) in response to DNA double-strand breaks (DSBs) generated by exogenous genotoxic agents and by stalled replication forks. Phosphorylation is dependent on the DNA damage checkpoint kinases rad3/ATR and tel1/ATM, spreads on either side of a detected DSB site and may mark the surrounding chromatin for recruitment of proteins required for DNA damage signaling and repair. Gamma-H2A is required for recruiting crb2, a modulator of DNA damage checkpoint signaling, to DSB sites. Gamma-H2A is removed from the DNA prior to the strand invasion-primer extension step of the repair process and subsequently dephosphorylated. Dephosphorylation is necessary for efficient recovery from the DNA damage checkpoint.</text>
</comment>
<comment type="PTM">
    <text evidence="1">Acetylated by esa1 to form H2AK4ac and H2AK7ac.</text>
</comment>
<comment type="miscellaneous">
    <text evidence="6">In contrast to vertebrates and insects, its C-terminus is not monoubiquitinated.</text>
</comment>
<comment type="similarity">
    <text evidence="6">Belongs to the histone H2A family.</text>
</comment>
<comment type="caution">
    <text evidence="6">To ensure consistency between histone entries, we follow the 'Brno' nomenclature for histone modifications, with positions referring to those used in the literature for the 'closest' model organism. Due to slight variations in histone sequences between organisms and to the presence of initiator methionine in UniProtKB/Swiss-Prot sequences, the actual positions of modified amino acids in the sequence generally differ. In this entry the following conventions are used: H2AK4ac = acetylated Lys-5; H2AK7ac = acetylated Lys-9; H2AS128ph = phosphorylated Ser-129.</text>
</comment>
<organism>
    <name type="scientific">Schizosaccharomyces pombe (strain 972 / ATCC 24843)</name>
    <name type="common">Fission yeast</name>
    <dbReference type="NCBI Taxonomy" id="284812"/>
    <lineage>
        <taxon>Eukaryota</taxon>
        <taxon>Fungi</taxon>
        <taxon>Dikarya</taxon>
        <taxon>Ascomycota</taxon>
        <taxon>Taphrinomycotina</taxon>
        <taxon>Schizosaccharomycetes</taxon>
        <taxon>Schizosaccharomycetales</taxon>
        <taxon>Schizosaccharomycetaceae</taxon>
        <taxon>Schizosaccharomyces</taxon>
    </lineage>
</organism>
<name>H2A1_SCHPO</name>
<reference key="1">
    <citation type="journal article" date="1985" name="Mol. Cell. Biol.">
        <title>Organization, primary structure, and evolution of histone H2A and H2B genes of the fission yeast Schizosaccharomyces pombe.</title>
        <authorList>
            <person name="Choe J."/>
            <person name="Schuster T."/>
            <person name="Grunstein M."/>
        </authorList>
    </citation>
    <scope>NUCLEOTIDE SEQUENCE [GENOMIC DNA]</scope>
</reference>
<reference key="2">
    <citation type="journal article" date="1985" name="EMBO J.">
        <title>Histone gene organization of fission yeast: a common upstream sequence.</title>
        <authorList>
            <person name="Matsumoto S."/>
            <person name="Yanagida M."/>
        </authorList>
    </citation>
    <scope>NUCLEOTIDE SEQUENCE [GENOMIC DNA]</scope>
</reference>
<reference key="3">
    <citation type="journal article" date="2002" name="Nature">
        <title>The genome sequence of Schizosaccharomyces pombe.</title>
        <authorList>
            <person name="Wood V."/>
            <person name="Gwilliam R."/>
            <person name="Rajandream M.A."/>
            <person name="Lyne M.H."/>
            <person name="Lyne R."/>
            <person name="Stewart A."/>
            <person name="Sgouros J.G."/>
            <person name="Peat N."/>
            <person name="Hayles J."/>
            <person name="Baker S.G."/>
            <person name="Basham D."/>
            <person name="Bowman S."/>
            <person name="Brooks K."/>
            <person name="Brown D."/>
            <person name="Brown S."/>
            <person name="Chillingworth T."/>
            <person name="Churcher C.M."/>
            <person name="Collins M."/>
            <person name="Connor R."/>
            <person name="Cronin A."/>
            <person name="Davis P."/>
            <person name="Feltwell T."/>
            <person name="Fraser A."/>
            <person name="Gentles S."/>
            <person name="Goble A."/>
            <person name="Hamlin N."/>
            <person name="Harris D.E."/>
            <person name="Hidalgo J."/>
            <person name="Hodgson G."/>
            <person name="Holroyd S."/>
            <person name="Hornsby T."/>
            <person name="Howarth S."/>
            <person name="Huckle E.J."/>
            <person name="Hunt S."/>
            <person name="Jagels K."/>
            <person name="James K.D."/>
            <person name="Jones L."/>
            <person name="Jones M."/>
            <person name="Leather S."/>
            <person name="McDonald S."/>
            <person name="McLean J."/>
            <person name="Mooney P."/>
            <person name="Moule S."/>
            <person name="Mungall K.L."/>
            <person name="Murphy L.D."/>
            <person name="Niblett D."/>
            <person name="Odell C."/>
            <person name="Oliver K."/>
            <person name="O'Neil S."/>
            <person name="Pearson D."/>
            <person name="Quail M.A."/>
            <person name="Rabbinowitsch E."/>
            <person name="Rutherford K.M."/>
            <person name="Rutter S."/>
            <person name="Saunders D."/>
            <person name="Seeger K."/>
            <person name="Sharp S."/>
            <person name="Skelton J."/>
            <person name="Simmonds M.N."/>
            <person name="Squares R."/>
            <person name="Squares S."/>
            <person name="Stevens K."/>
            <person name="Taylor K."/>
            <person name="Taylor R.G."/>
            <person name="Tivey A."/>
            <person name="Walsh S.V."/>
            <person name="Warren T."/>
            <person name="Whitehead S."/>
            <person name="Woodward J.R."/>
            <person name="Volckaert G."/>
            <person name="Aert R."/>
            <person name="Robben J."/>
            <person name="Grymonprez B."/>
            <person name="Weltjens I."/>
            <person name="Vanstreels E."/>
            <person name="Rieger M."/>
            <person name="Schaefer M."/>
            <person name="Mueller-Auer S."/>
            <person name="Gabel C."/>
            <person name="Fuchs M."/>
            <person name="Duesterhoeft A."/>
            <person name="Fritzc C."/>
            <person name="Holzer E."/>
            <person name="Moestl D."/>
            <person name="Hilbert H."/>
            <person name="Borzym K."/>
            <person name="Langer I."/>
            <person name="Beck A."/>
            <person name="Lehrach H."/>
            <person name="Reinhardt R."/>
            <person name="Pohl T.M."/>
            <person name="Eger P."/>
            <person name="Zimmermann W."/>
            <person name="Wedler H."/>
            <person name="Wambutt R."/>
            <person name="Purnelle B."/>
            <person name="Goffeau A."/>
            <person name="Cadieu E."/>
            <person name="Dreano S."/>
            <person name="Gloux S."/>
            <person name="Lelaure V."/>
            <person name="Mottier S."/>
            <person name="Galibert F."/>
            <person name="Aves S.J."/>
            <person name="Xiang Z."/>
            <person name="Hunt C."/>
            <person name="Moore K."/>
            <person name="Hurst S.M."/>
            <person name="Lucas M."/>
            <person name="Rochet M."/>
            <person name="Gaillardin C."/>
            <person name="Tallada V.A."/>
            <person name="Garzon A."/>
            <person name="Thode G."/>
            <person name="Daga R.R."/>
            <person name="Cruzado L."/>
            <person name="Jimenez J."/>
            <person name="Sanchez M."/>
            <person name="del Rey F."/>
            <person name="Benito J."/>
            <person name="Dominguez A."/>
            <person name="Revuelta J.L."/>
            <person name="Moreno S."/>
            <person name="Armstrong J."/>
            <person name="Forsburg S.L."/>
            <person name="Cerutti L."/>
            <person name="Lowe T."/>
            <person name="McCombie W.R."/>
            <person name="Paulsen I."/>
            <person name="Potashkin J."/>
            <person name="Shpakovski G.V."/>
            <person name="Ussery D."/>
            <person name="Barrell B.G."/>
            <person name="Nurse P."/>
        </authorList>
    </citation>
    <scope>NUCLEOTIDE SEQUENCE [LARGE SCALE GENOMIC DNA]</scope>
    <source>
        <strain>972 / ATCC 24843</strain>
    </source>
</reference>
<reference key="4">
    <citation type="journal article" date="2004" name="Mol. Cell. Biol.">
        <title>Histone H2A phosphorylation controls Crb2 recruitment at DNA breaks, maintains checkpoint arrest, and influences DNA repair in fission yeast.</title>
        <authorList>
            <person name="Nakamura T.M."/>
            <person name="Du L.-L."/>
            <person name="Redon C."/>
            <person name="Russell P."/>
        </authorList>
    </citation>
    <scope>FUNCTION</scope>
    <scope>MUTAGENESIS OF SER-129</scope>
    <scope>PHOSPHORYLATION AT SER-129</scope>
</reference>
<reference key="5">
    <citation type="journal article" date="2014" name="PLoS ONE">
        <title>Mdb1, a fission yeast homolog of human MDC1, modulates DNA damage response and mitotic spindle function.</title>
        <authorList>
            <person name="Wei Y."/>
            <person name="Wang H.T."/>
            <person name="Zhai Y."/>
            <person name="Russell P."/>
            <person name="Du L.L."/>
        </authorList>
    </citation>
    <scope>INTERACTION WITH MDB1</scope>
    <scope>PHOSPHORYLATION AT SER-129</scope>
    <scope>MUTAGENESIS OF SER-129</scope>
</reference>